<organism>
    <name type="scientific">Stutzerimonas stutzeri (strain A1501)</name>
    <name type="common">Pseudomonas stutzeri</name>
    <dbReference type="NCBI Taxonomy" id="379731"/>
    <lineage>
        <taxon>Bacteria</taxon>
        <taxon>Pseudomonadati</taxon>
        <taxon>Pseudomonadota</taxon>
        <taxon>Gammaproteobacteria</taxon>
        <taxon>Pseudomonadales</taxon>
        <taxon>Pseudomonadaceae</taxon>
        <taxon>Stutzerimonas</taxon>
    </lineage>
</organism>
<reference key="1">
    <citation type="journal article" date="2008" name="Proc. Natl. Acad. Sci. U.S.A.">
        <title>Nitrogen fixation island and rhizosphere competence traits in the genome of root-associated Pseudomonas stutzeri A1501.</title>
        <authorList>
            <person name="Yan Y."/>
            <person name="Yang J."/>
            <person name="Dou Y."/>
            <person name="Chen M."/>
            <person name="Ping S."/>
            <person name="Peng J."/>
            <person name="Lu W."/>
            <person name="Zhang W."/>
            <person name="Yao Z."/>
            <person name="Li H."/>
            <person name="Liu W."/>
            <person name="He S."/>
            <person name="Geng L."/>
            <person name="Zhang X."/>
            <person name="Yang F."/>
            <person name="Yu H."/>
            <person name="Zhan Y."/>
            <person name="Li D."/>
            <person name="Lin Z."/>
            <person name="Wang Y."/>
            <person name="Elmerich C."/>
            <person name="Lin M."/>
            <person name="Jin Q."/>
        </authorList>
    </citation>
    <scope>NUCLEOTIDE SEQUENCE [LARGE SCALE GENOMIC DNA]</scope>
    <source>
        <strain>A1501</strain>
    </source>
</reference>
<keyword id="KW-1185">Reference proteome</keyword>
<keyword id="KW-0687">Ribonucleoprotein</keyword>
<keyword id="KW-0689">Ribosomal protein</keyword>
<keyword id="KW-0694">RNA-binding</keyword>
<keyword id="KW-0699">rRNA-binding</keyword>
<keyword id="KW-0820">tRNA-binding</keyword>
<dbReference type="EMBL" id="CP000304">
    <property type="protein sequence ID" value="ABP78488.1"/>
    <property type="molecule type" value="Genomic_DNA"/>
</dbReference>
<dbReference type="RefSeq" id="WP_003281836.1">
    <property type="nucleotide sequence ID" value="NC_009434.1"/>
</dbReference>
<dbReference type="SMR" id="A4VHN7"/>
<dbReference type="GeneID" id="75213392"/>
<dbReference type="KEGG" id="psa:PST_0791"/>
<dbReference type="eggNOG" id="COG0197">
    <property type="taxonomic scope" value="Bacteria"/>
</dbReference>
<dbReference type="HOGENOM" id="CLU_078858_2_1_6"/>
<dbReference type="Proteomes" id="UP000000233">
    <property type="component" value="Chromosome"/>
</dbReference>
<dbReference type="GO" id="GO:0022625">
    <property type="term" value="C:cytosolic large ribosomal subunit"/>
    <property type="evidence" value="ECO:0007669"/>
    <property type="project" value="TreeGrafter"/>
</dbReference>
<dbReference type="GO" id="GO:0019843">
    <property type="term" value="F:rRNA binding"/>
    <property type="evidence" value="ECO:0007669"/>
    <property type="project" value="UniProtKB-UniRule"/>
</dbReference>
<dbReference type="GO" id="GO:0003735">
    <property type="term" value="F:structural constituent of ribosome"/>
    <property type="evidence" value="ECO:0007669"/>
    <property type="project" value="InterPro"/>
</dbReference>
<dbReference type="GO" id="GO:0000049">
    <property type="term" value="F:tRNA binding"/>
    <property type="evidence" value="ECO:0007669"/>
    <property type="project" value="UniProtKB-KW"/>
</dbReference>
<dbReference type="GO" id="GO:0006412">
    <property type="term" value="P:translation"/>
    <property type="evidence" value="ECO:0007669"/>
    <property type="project" value="UniProtKB-UniRule"/>
</dbReference>
<dbReference type="CDD" id="cd01433">
    <property type="entry name" value="Ribosomal_L16_L10e"/>
    <property type="match status" value="1"/>
</dbReference>
<dbReference type="FunFam" id="3.90.1170.10:FF:000001">
    <property type="entry name" value="50S ribosomal protein L16"/>
    <property type="match status" value="1"/>
</dbReference>
<dbReference type="Gene3D" id="3.90.1170.10">
    <property type="entry name" value="Ribosomal protein L10e/L16"/>
    <property type="match status" value="1"/>
</dbReference>
<dbReference type="HAMAP" id="MF_01342">
    <property type="entry name" value="Ribosomal_uL16"/>
    <property type="match status" value="1"/>
</dbReference>
<dbReference type="InterPro" id="IPR047873">
    <property type="entry name" value="Ribosomal_uL16"/>
</dbReference>
<dbReference type="InterPro" id="IPR000114">
    <property type="entry name" value="Ribosomal_uL16_bact-type"/>
</dbReference>
<dbReference type="InterPro" id="IPR020798">
    <property type="entry name" value="Ribosomal_uL16_CS"/>
</dbReference>
<dbReference type="InterPro" id="IPR016180">
    <property type="entry name" value="Ribosomal_uL16_dom"/>
</dbReference>
<dbReference type="InterPro" id="IPR036920">
    <property type="entry name" value="Ribosomal_uL16_sf"/>
</dbReference>
<dbReference type="NCBIfam" id="TIGR01164">
    <property type="entry name" value="rplP_bact"/>
    <property type="match status" value="1"/>
</dbReference>
<dbReference type="PANTHER" id="PTHR12220">
    <property type="entry name" value="50S/60S RIBOSOMAL PROTEIN L16"/>
    <property type="match status" value="1"/>
</dbReference>
<dbReference type="PANTHER" id="PTHR12220:SF13">
    <property type="entry name" value="LARGE RIBOSOMAL SUBUNIT PROTEIN UL16M"/>
    <property type="match status" value="1"/>
</dbReference>
<dbReference type="Pfam" id="PF00252">
    <property type="entry name" value="Ribosomal_L16"/>
    <property type="match status" value="1"/>
</dbReference>
<dbReference type="PRINTS" id="PR00060">
    <property type="entry name" value="RIBOSOMALL16"/>
</dbReference>
<dbReference type="SUPFAM" id="SSF54686">
    <property type="entry name" value="Ribosomal protein L16p/L10e"/>
    <property type="match status" value="1"/>
</dbReference>
<dbReference type="PROSITE" id="PS00586">
    <property type="entry name" value="RIBOSOMAL_L16_1"/>
    <property type="match status" value="1"/>
</dbReference>
<dbReference type="PROSITE" id="PS00701">
    <property type="entry name" value="RIBOSOMAL_L16_2"/>
    <property type="match status" value="1"/>
</dbReference>
<proteinExistence type="inferred from homology"/>
<sequence>MLQPKRTKFRKQMTGHNRGLAQRGSKVSFGEFALKSVSRGRLTARQIEAARRALTRHVKRGGKIWIRVFPDKPVTKKPLEVRMGKGKGSVEYWVAQIQPGKVLYEIEGVSEELAREAFALAAAKLPLATSFVKRTVM</sequence>
<comment type="function">
    <text evidence="1">Binds 23S rRNA and is also seen to make contacts with the A and possibly P site tRNAs.</text>
</comment>
<comment type="subunit">
    <text evidence="1">Part of the 50S ribosomal subunit.</text>
</comment>
<comment type="similarity">
    <text evidence="1">Belongs to the universal ribosomal protein uL16 family.</text>
</comment>
<accession>A4VHN7</accession>
<feature type="chain" id="PRO_1000054685" description="Large ribosomal subunit protein uL16">
    <location>
        <begin position="1"/>
        <end position="137"/>
    </location>
</feature>
<protein>
    <recommendedName>
        <fullName evidence="1">Large ribosomal subunit protein uL16</fullName>
    </recommendedName>
    <alternativeName>
        <fullName evidence="2">50S ribosomal protein L16</fullName>
    </alternativeName>
</protein>
<evidence type="ECO:0000255" key="1">
    <source>
        <dbReference type="HAMAP-Rule" id="MF_01342"/>
    </source>
</evidence>
<evidence type="ECO:0000305" key="2"/>
<name>RL16_STUS1</name>
<gene>
    <name evidence="1" type="primary">rplP</name>
    <name type="ordered locus">PST_0791</name>
</gene>